<reference key="1">
    <citation type="journal article" date="2005" name="Nucleic Acids Res.">
        <title>Genome dynamics and diversity of Shigella species, the etiologic agents of bacillary dysentery.</title>
        <authorList>
            <person name="Yang F."/>
            <person name="Yang J."/>
            <person name="Zhang X."/>
            <person name="Chen L."/>
            <person name="Jiang Y."/>
            <person name="Yan Y."/>
            <person name="Tang X."/>
            <person name="Wang J."/>
            <person name="Xiong Z."/>
            <person name="Dong J."/>
            <person name="Xue Y."/>
            <person name="Zhu Y."/>
            <person name="Xu X."/>
            <person name="Sun L."/>
            <person name="Chen S."/>
            <person name="Nie H."/>
            <person name="Peng J."/>
            <person name="Xu J."/>
            <person name="Wang Y."/>
            <person name="Yuan Z."/>
            <person name="Wen Y."/>
            <person name="Yao Z."/>
            <person name="Shen Y."/>
            <person name="Qiang B."/>
            <person name="Hou Y."/>
            <person name="Yu J."/>
            <person name="Jin Q."/>
        </authorList>
    </citation>
    <scope>NUCLEOTIDE SEQUENCE [LARGE SCALE GENOMIC DNA]</scope>
    <source>
        <strain>Ss046</strain>
    </source>
</reference>
<name>ISCR_SHISS</name>
<protein>
    <recommendedName>
        <fullName evidence="1">HTH-type transcriptional regulator IscR</fullName>
    </recommendedName>
</protein>
<evidence type="ECO:0000255" key="1">
    <source>
        <dbReference type="HAMAP-Rule" id="MF_01176"/>
    </source>
</evidence>
<keyword id="KW-0001">2Fe-2S</keyword>
<keyword id="KW-0010">Activator</keyword>
<keyword id="KW-0238">DNA-binding</keyword>
<keyword id="KW-0408">Iron</keyword>
<keyword id="KW-0411">Iron-sulfur</keyword>
<keyword id="KW-0479">Metal-binding</keyword>
<keyword id="KW-1185">Reference proteome</keyword>
<keyword id="KW-0678">Repressor</keyword>
<keyword id="KW-0804">Transcription</keyword>
<keyword id="KW-0805">Transcription regulation</keyword>
<dbReference type="EMBL" id="CP000038">
    <property type="protein sequence ID" value="AAZ89241.1"/>
    <property type="molecule type" value="Genomic_DNA"/>
</dbReference>
<dbReference type="RefSeq" id="WP_001241356.1">
    <property type="nucleotide sequence ID" value="NC_007384.1"/>
</dbReference>
<dbReference type="SMR" id="Q3YZ21"/>
<dbReference type="GeneID" id="93774605"/>
<dbReference type="KEGG" id="ssn:SSON_2613"/>
<dbReference type="HOGENOM" id="CLU_107144_0_0_6"/>
<dbReference type="Proteomes" id="UP000002529">
    <property type="component" value="Chromosome"/>
</dbReference>
<dbReference type="GO" id="GO:0005829">
    <property type="term" value="C:cytosol"/>
    <property type="evidence" value="ECO:0007669"/>
    <property type="project" value="TreeGrafter"/>
</dbReference>
<dbReference type="GO" id="GO:0051537">
    <property type="term" value="F:2 iron, 2 sulfur cluster binding"/>
    <property type="evidence" value="ECO:0007669"/>
    <property type="project" value="UniProtKB-KW"/>
</dbReference>
<dbReference type="GO" id="GO:0003700">
    <property type="term" value="F:DNA-binding transcription factor activity"/>
    <property type="evidence" value="ECO:0007669"/>
    <property type="project" value="UniProtKB-UniRule"/>
</dbReference>
<dbReference type="GO" id="GO:0003690">
    <property type="term" value="F:double-stranded DNA binding"/>
    <property type="evidence" value="ECO:0007669"/>
    <property type="project" value="UniProtKB-UniRule"/>
</dbReference>
<dbReference type="GO" id="GO:0005506">
    <property type="term" value="F:iron ion binding"/>
    <property type="evidence" value="ECO:0007669"/>
    <property type="project" value="UniProtKB-UniRule"/>
</dbReference>
<dbReference type="FunFam" id="1.10.10.10:FF:000026">
    <property type="entry name" value="HTH-type transcriptional regulator IscR"/>
    <property type="match status" value="1"/>
</dbReference>
<dbReference type="Gene3D" id="1.10.10.10">
    <property type="entry name" value="Winged helix-like DNA-binding domain superfamily/Winged helix DNA-binding domain"/>
    <property type="match status" value="1"/>
</dbReference>
<dbReference type="HAMAP" id="MF_01176">
    <property type="entry name" value="HTH_type_IscR"/>
    <property type="match status" value="1"/>
</dbReference>
<dbReference type="InterPro" id="IPR010242">
    <property type="entry name" value="TF_HTH_IscR"/>
</dbReference>
<dbReference type="InterPro" id="IPR030489">
    <property type="entry name" value="TR_Rrf2-type_CS"/>
</dbReference>
<dbReference type="InterPro" id="IPR000944">
    <property type="entry name" value="Tscrpt_reg_Rrf2"/>
</dbReference>
<dbReference type="InterPro" id="IPR036388">
    <property type="entry name" value="WH-like_DNA-bd_sf"/>
</dbReference>
<dbReference type="InterPro" id="IPR036390">
    <property type="entry name" value="WH_DNA-bd_sf"/>
</dbReference>
<dbReference type="NCBIfam" id="TIGR02010">
    <property type="entry name" value="IscR"/>
    <property type="match status" value="1"/>
</dbReference>
<dbReference type="NCBIfam" id="NF008110">
    <property type="entry name" value="PRK10857.1"/>
    <property type="match status" value="1"/>
</dbReference>
<dbReference type="NCBIfam" id="TIGR00738">
    <property type="entry name" value="rrf2_super"/>
    <property type="match status" value="1"/>
</dbReference>
<dbReference type="PANTHER" id="PTHR33221:SF5">
    <property type="entry name" value="HTH-TYPE TRANSCRIPTIONAL REGULATOR ISCR"/>
    <property type="match status" value="1"/>
</dbReference>
<dbReference type="PANTHER" id="PTHR33221">
    <property type="entry name" value="WINGED HELIX-TURN-HELIX TRANSCRIPTIONAL REGULATOR, RRF2 FAMILY"/>
    <property type="match status" value="1"/>
</dbReference>
<dbReference type="Pfam" id="PF02082">
    <property type="entry name" value="Rrf2"/>
    <property type="match status" value="1"/>
</dbReference>
<dbReference type="SUPFAM" id="SSF46785">
    <property type="entry name" value="Winged helix' DNA-binding domain"/>
    <property type="match status" value="1"/>
</dbReference>
<dbReference type="PROSITE" id="PS01332">
    <property type="entry name" value="HTH_RRF2_1"/>
    <property type="match status" value="1"/>
</dbReference>
<dbReference type="PROSITE" id="PS51197">
    <property type="entry name" value="HTH_RRF2_2"/>
    <property type="match status" value="1"/>
</dbReference>
<accession>Q3YZ21</accession>
<organism>
    <name type="scientific">Shigella sonnei (strain Ss046)</name>
    <dbReference type="NCBI Taxonomy" id="300269"/>
    <lineage>
        <taxon>Bacteria</taxon>
        <taxon>Pseudomonadati</taxon>
        <taxon>Pseudomonadota</taxon>
        <taxon>Gammaproteobacteria</taxon>
        <taxon>Enterobacterales</taxon>
        <taxon>Enterobacteriaceae</taxon>
        <taxon>Shigella</taxon>
    </lineage>
</organism>
<comment type="function">
    <text evidence="1">Regulates the transcription of several operons and genes involved in the biogenesis of Fe-S clusters and Fe-S-containing proteins.</text>
</comment>
<comment type="cofactor">
    <cofactor evidence="1">
        <name>[2Fe-2S] cluster</name>
        <dbReference type="ChEBI" id="CHEBI:190135"/>
    </cofactor>
    <text evidence="1">Binds 1 [2Fe-2S] cluster.</text>
</comment>
<feature type="chain" id="PRO_0000268928" description="HTH-type transcriptional regulator IscR">
    <location>
        <begin position="1"/>
        <end position="162"/>
    </location>
</feature>
<feature type="domain" description="HTH rrf2-type" evidence="1">
    <location>
        <begin position="2"/>
        <end position="131"/>
    </location>
</feature>
<feature type="DNA-binding region" description="H-T-H motif" evidence="1">
    <location>
        <begin position="28"/>
        <end position="51"/>
    </location>
</feature>
<feature type="binding site" evidence="1">
    <location>
        <position position="92"/>
    </location>
    <ligand>
        <name>[2Fe-2S] cluster</name>
        <dbReference type="ChEBI" id="CHEBI:190135"/>
    </ligand>
</feature>
<feature type="binding site" evidence="1">
    <location>
        <position position="98"/>
    </location>
    <ligand>
        <name>[2Fe-2S] cluster</name>
        <dbReference type="ChEBI" id="CHEBI:190135"/>
    </ligand>
</feature>
<feature type="binding site" evidence="1">
    <location>
        <position position="104"/>
    </location>
    <ligand>
        <name>[2Fe-2S] cluster</name>
        <dbReference type="ChEBI" id="CHEBI:190135"/>
    </ligand>
</feature>
<gene>
    <name evidence="1" type="primary">iscR</name>
    <name type="ordered locus">SSON_2613</name>
</gene>
<sequence length="162" mass="17349">MRLTSKGRYAVTAMLDVALNSEAGPVPLADISERQGISLSYLEQLFSRLRKNGLVSSVRGPGGGYLLGKDASSIAVGEVISAVDESVDATRCQGKGGCQGGDKCLTHALWRDLSDRLTGFLNNITLGELVNNQEVLDVSGRQHTHDAPRTRIQDAIDVKLRA</sequence>
<proteinExistence type="inferred from homology"/>